<name>RL14_PIG</name>
<comment type="function">
    <text evidence="1">Component of the large ribosomal subunit. The ribosome is a large ribonucleoprotein complex responsible for the synthesis of proteins in the cell.</text>
</comment>
<comment type="subunit">
    <text evidence="1">Component of the large ribosomal subunit.</text>
</comment>
<comment type="subcellular location">
    <subcellularLocation>
        <location evidence="1">Cytoplasm</location>
    </subcellularLocation>
</comment>
<comment type="similarity">
    <text evidence="4">Belongs to the eukaryotic ribosomal protein eL14 family.</text>
</comment>
<feature type="chain" id="PRO_0000289658" description="Large ribosomal subunit protein eL14">
    <location>
        <begin position="1"/>
        <end position="213"/>
    </location>
</feature>
<feature type="repeat" description="1-1; approximate">
    <location>
        <begin position="169"/>
        <end position="173"/>
    </location>
</feature>
<feature type="repeat" description="1-2">
    <location>
        <begin position="174"/>
        <end position="178"/>
    </location>
</feature>
<feature type="repeat" description="1-3">
    <location>
        <begin position="179"/>
        <end position="183"/>
    </location>
</feature>
<feature type="repeat" description="1-4">
    <location>
        <begin position="184"/>
        <end position="188"/>
    </location>
</feature>
<feature type="repeat" description="2-1">
    <location>
        <begin position="191"/>
        <end position="193"/>
    </location>
</feature>
<feature type="repeat" description="2-2">
    <location>
        <begin position="194"/>
        <end position="196"/>
    </location>
</feature>
<feature type="region of interest" description="Disordered" evidence="3">
    <location>
        <begin position="166"/>
        <end position="213"/>
    </location>
</feature>
<feature type="region of interest" description="4 X 5 AA tandem repeats of Q-K-A-[APS]-X">
    <location>
        <begin position="169"/>
        <end position="188"/>
    </location>
</feature>
<feature type="region of interest" description="2 X 3 AA tandem repeats of K-G-Q">
    <location>
        <begin position="191"/>
        <end position="196"/>
    </location>
</feature>
<feature type="modified residue" description="N6-acetyllysine" evidence="1">
    <location>
        <position position="79"/>
    </location>
</feature>
<feature type="modified residue" description="N6-acetyllysine; alternate" evidence="1">
    <location>
        <position position="85"/>
    </location>
</feature>
<feature type="modified residue" description="N6-succinyllysine; alternate" evidence="2">
    <location>
        <position position="85"/>
    </location>
</feature>
<feature type="modified residue" description="Phosphoserine" evidence="1">
    <location>
        <position position="139"/>
    </location>
</feature>
<feature type="modified residue" description="N6-succinyllysine" evidence="2">
    <location>
        <position position="202"/>
    </location>
</feature>
<feature type="cross-link" description="Glycyl lysine isopeptide (Lys-Gly) (interchain with G-Cter in SUMO2)" evidence="1">
    <location>
        <position position="124"/>
    </location>
</feature>
<keyword id="KW-0002">3D-structure</keyword>
<keyword id="KW-0007">Acetylation</keyword>
<keyword id="KW-0963">Cytoplasm</keyword>
<keyword id="KW-1017">Isopeptide bond</keyword>
<keyword id="KW-0597">Phosphoprotein</keyword>
<keyword id="KW-1185">Reference proteome</keyword>
<keyword id="KW-0677">Repeat</keyword>
<keyword id="KW-0687">Ribonucleoprotein</keyword>
<keyword id="KW-0689">Ribosomal protein</keyword>
<keyword id="KW-0832">Ubl conjugation</keyword>
<evidence type="ECO:0000250" key="1">
    <source>
        <dbReference type="UniProtKB" id="P50914"/>
    </source>
</evidence>
<evidence type="ECO:0000250" key="2">
    <source>
        <dbReference type="UniProtKB" id="Q9CR57"/>
    </source>
</evidence>
<evidence type="ECO:0000256" key="3">
    <source>
        <dbReference type="SAM" id="MobiDB-lite"/>
    </source>
</evidence>
<evidence type="ECO:0000305" key="4"/>
<sequence length="213" mass="23330">MVFRRFVEVGRVAYVSFGPHAGKLVAIVDVIDQNRALVDGPCTQVRRQAMPFKCMQLTDFILKFPHSARQKYVRKAWEKADINAKWAATRWAKKIEAREKKAKMTDFDRYKVMKARKMRNRLIKLEVKKLQKAALLKASPKKALAKGAAAAAAAAAAKVPVKKITTAGKKAPAQKAPAQKAAGQKAAPPPKAQKVQKPPAQKAPAPKASGEKA</sequence>
<gene>
    <name type="primary">RPL14</name>
</gene>
<reference key="1">
    <citation type="submission" date="2006-05" db="EMBL/GenBank/DDBJ databases">
        <title>Generation and analysis of cDNA sequences derived from a porcine skeletal muscle library.</title>
        <authorList>
            <person name="Cai G."/>
            <person name="Chen Y."/>
            <person name="Wang C."/>
            <person name="Li J."/>
            <person name="Peng G."/>
            <person name="Zhang H."/>
        </authorList>
    </citation>
    <scope>NUCLEOTIDE SEQUENCE [MRNA]</scope>
    <source>
        <tissue>Longissimus dorsi muscle</tissue>
    </source>
</reference>
<proteinExistence type="evidence at protein level"/>
<organism>
    <name type="scientific">Sus scrofa</name>
    <name type="common">Pig</name>
    <dbReference type="NCBI Taxonomy" id="9823"/>
    <lineage>
        <taxon>Eukaryota</taxon>
        <taxon>Metazoa</taxon>
        <taxon>Chordata</taxon>
        <taxon>Craniata</taxon>
        <taxon>Vertebrata</taxon>
        <taxon>Euteleostomi</taxon>
        <taxon>Mammalia</taxon>
        <taxon>Eutheria</taxon>
        <taxon>Laurasiatheria</taxon>
        <taxon>Artiodactyla</taxon>
        <taxon>Suina</taxon>
        <taxon>Suidae</taxon>
        <taxon>Sus</taxon>
    </lineage>
</organism>
<protein>
    <recommendedName>
        <fullName evidence="4">Large ribosomal subunit protein eL14</fullName>
    </recommendedName>
    <alternativeName>
        <fullName>60S ribosomal protein L14</fullName>
    </alternativeName>
</protein>
<accession>A1XQU3</accession>
<dbReference type="EMBL" id="DQ629165">
    <property type="protein sequence ID" value="ABK55649.1"/>
    <property type="molecule type" value="mRNA"/>
</dbReference>
<dbReference type="RefSeq" id="NP_001090947.1">
    <property type="nucleotide sequence ID" value="NM_001097478.1"/>
</dbReference>
<dbReference type="PDB" id="3J7O">
    <property type="method" value="EM"/>
    <property type="resolution" value="3.50 A"/>
    <property type="chains" value="M=1-213"/>
</dbReference>
<dbReference type="PDB" id="3J7P">
    <property type="method" value="EM"/>
    <property type="resolution" value="3.50 A"/>
    <property type="chains" value="M=1-213"/>
</dbReference>
<dbReference type="PDB" id="3J7Q">
    <property type="method" value="EM"/>
    <property type="resolution" value="3.50 A"/>
    <property type="chains" value="M=1-213"/>
</dbReference>
<dbReference type="PDB" id="3J7R">
    <property type="method" value="EM"/>
    <property type="resolution" value="3.90 A"/>
    <property type="chains" value="M=1-213"/>
</dbReference>
<dbReference type="PDBsum" id="3J7O"/>
<dbReference type="PDBsum" id="3J7P"/>
<dbReference type="PDBsum" id="3J7Q"/>
<dbReference type="PDBsum" id="3J7R"/>
<dbReference type="SMR" id="A1XQU3"/>
<dbReference type="FunCoup" id="A1XQU3">
    <property type="interactions" value="2420"/>
</dbReference>
<dbReference type="STRING" id="9823.ENSSSCP00000012018"/>
<dbReference type="PaxDb" id="9823-ENSSSCP00000012018"/>
<dbReference type="PeptideAtlas" id="A1XQU3"/>
<dbReference type="GeneID" id="100037994"/>
<dbReference type="KEGG" id="ssc:100037994"/>
<dbReference type="CTD" id="9045"/>
<dbReference type="eggNOG" id="KOG3421">
    <property type="taxonomic scope" value="Eukaryota"/>
</dbReference>
<dbReference type="InParanoid" id="A1XQU3"/>
<dbReference type="OrthoDB" id="1875589at2759"/>
<dbReference type="Proteomes" id="UP000008227">
    <property type="component" value="Unplaced"/>
</dbReference>
<dbReference type="Proteomes" id="UP000314985">
    <property type="component" value="Unplaced"/>
</dbReference>
<dbReference type="Proteomes" id="UP000694570">
    <property type="component" value="Unplaced"/>
</dbReference>
<dbReference type="Proteomes" id="UP000694571">
    <property type="component" value="Unplaced"/>
</dbReference>
<dbReference type="Proteomes" id="UP000694720">
    <property type="component" value="Unplaced"/>
</dbReference>
<dbReference type="Proteomes" id="UP000694722">
    <property type="component" value="Unplaced"/>
</dbReference>
<dbReference type="Proteomes" id="UP000694723">
    <property type="component" value="Unplaced"/>
</dbReference>
<dbReference type="Proteomes" id="UP000694724">
    <property type="component" value="Unplaced"/>
</dbReference>
<dbReference type="Proteomes" id="UP000694725">
    <property type="component" value="Unplaced"/>
</dbReference>
<dbReference type="Proteomes" id="UP000694726">
    <property type="component" value="Unplaced"/>
</dbReference>
<dbReference type="Proteomes" id="UP000694727">
    <property type="component" value="Unplaced"/>
</dbReference>
<dbReference type="Proteomes" id="UP000694728">
    <property type="component" value="Unplaced"/>
</dbReference>
<dbReference type="GO" id="GO:0098556">
    <property type="term" value="C:cytoplasmic side of rough endoplasmic reticulum membrane"/>
    <property type="evidence" value="ECO:0000314"/>
    <property type="project" value="UniProtKB"/>
</dbReference>
<dbReference type="GO" id="GO:0022625">
    <property type="term" value="C:cytosolic large ribosomal subunit"/>
    <property type="evidence" value="ECO:0000318"/>
    <property type="project" value="GO_Central"/>
</dbReference>
<dbReference type="GO" id="GO:0015934">
    <property type="term" value="C:large ribosomal subunit"/>
    <property type="evidence" value="ECO:0000314"/>
    <property type="project" value="UniProtKB"/>
</dbReference>
<dbReference type="GO" id="GO:0003723">
    <property type="term" value="F:RNA binding"/>
    <property type="evidence" value="ECO:0000318"/>
    <property type="project" value="GO_Central"/>
</dbReference>
<dbReference type="GO" id="GO:0003735">
    <property type="term" value="F:structural constituent of ribosome"/>
    <property type="evidence" value="ECO:0000318"/>
    <property type="project" value="GO_Central"/>
</dbReference>
<dbReference type="GO" id="GO:0042273">
    <property type="term" value="P:ribosomal large subunit biogenesis"/>
    <property type="evidence" value="ECO:0000318"/>
    <property type="project" value="GO_Central"/>
</dbReference>
<dbReference type="GO" id="GO:0006412">
    <property type="term" value="P:translation"/>
    <property type="evidence" value="ECO:0007669"/>
    <property type="project" value="InterPro"/>
</dbReference>
<dbReference type="CDD" id="cd23702">
    <property type="entry name" value="eL14"/>
    <property type="match status" value="1"/>
</dbReference>
<dbReference type="FunFam" id="2.30.30.30:FF:000022">
    <property type="entry name" value="60S ribosomal protein L14"/>
    <property type="match status" value="1"/>
</dbReference>
<dbReference type="Gene3D" id="2.30.30.30">
    <property type="match status" value="1"/>
</dbReference>
<dbReference type="Gene3D" id="6.10.250.2270">
    <property type="match status" value="1"/>
</dbReference>
<dbReference type="InterPro" id="IPR014722">
    <property type="entry name" value="Rib_uL2_dom2"/>
</dbReference>
<dbReference type="InterPro" id="IPR039660">
    <property type="entry name" value="Ribosomal_eL14"/>
</dbReference>
<dbReference type="InterPro" id="IPR002784">
    <property type="entry name" value="Ribosomal_eL14_dom"/>
</dbReference>
<dbReference type="InterPro" id="IPR008991">
    <property type="entry name" value="Translation_prot_SH3-like_sf"/>
</dbReference>
<dbReference type="PANTHER" id="PTHR11127">
    <property type="entry name" value="60S RIBOSOMAL PROTEIN L14"/>
    <property type="match status" value="1"/>
</dbReference>
<dbReference type="PANTHER" id="PTHR11127:SF2">
    <property type="entry name" value="LARGE RIBOSOMAL SUBUNIT PROTEIN EL14"/>
    <property type="match status" value="1"/>
</dbReference>
<dbReference type="Pfam" id="PF01929">
    <property type="entry name" value="Ribosomal_L14e"/>
    <property type="match status" value="1"/>
</dbReference>
<dbReference type="SUPFAM" id="SSF50104">
    <property type="entry name" value="Translation proteins SH3-like domain"/>
    <property type="match status" value="1"/>
</dbReference>